<evidence type="ECO:0000305" key="1"/>
<reference key="1">
    <citation type="journal article" date="2001" name="Virology">
        <title>Sequences and replication of genomes of the archaeal rudiviruses SIRV1 and SIRV2: relationships to the archaeal lipothrixvirus SIFV and some eukaryal viruses.</title>
        <authorList>
            <person name="Peng X."/>
            <person name="Blum H."/>
            <person name="She Q."/>
            <person name="Mallok S."/>
            <person name="Bruegger K."/>
            <person name="Garrett R.A."/>
            <person name="Zillig W."/>
            <person name="Prangishvili D."/>
        </authorList>
    </citation>
    <scope>NUCLEOTIDE SEQUENCE [LARGE SCALE GENOMIC DNA]</scope>
    <source>
        <strain>Isolate variant VIII</strain>
    </source>
</reference>
<reference key="2">
    <citation type="journal article" date="2004" name="Mol. Microbiol.">
        <title>Multiple variants of the archaeal DNA rudivirus SIRV1 in a single host and a novel mechanism of genomic variation.</title>
        <authorList>
            <person name="Peng X."/>
            <person name="Kessler A."/>
            <person name="Phan H."/>
            <person name="Garrett R.A."/>
            <person name="Prangishvili D."/>
        </authorList>
    </citation>
    <scope>NUCLEOTIDE SEQUENCE [LARGE SCALE GENOMIC DNA]</scope>
    <source>
        <strain>Isolate variant XX</strain>
    </source>
</reference>
<dbReference type="EC" id="2.4.-.-"/>
<dbReference type="EMBL" id="AJ414696">
    <property type="protein sequence ID" value="CAC93976.1"/>
    <property type="molecule type" value="Genomic_DNA"/>
</dbReference>
<dbReference type="EMBL" id="AJ748296">
    <property type="protein sequence ID" value="CAG38839.1"/>
    <property type="molecule type" value="Genomic_DNA"/>
</dbReference>
<dbReference type="RefSeq" id="NP_666609.1">
    <property type="nucleotide sequence ID" value="NC_004087.1"/>
</dbReference>
<dbReference type="SMR" id="Q8QL34"/>
<dbReference type="CAZy" id="GT4">
    <property type="family name" value="Glycosyltransferase Family 4"/>
</dbReference>
<dbReference type="KEGG" id="vg:951371"/>
<dbReference type="OrthoDB" id="4120at10239"/>
<dbReference type="Proteomes" id="UP000002270">
    <property type="component" value="Genome"/>
</dbReference>
<dbReference type="Proteomes" id="UP000223181">
    <property type="component" value="Segment"/>
</dbReference>
<dbReference type="GO" id="GO:0016757">
    <property type="term" value="F:glycosyltransferase activity"/>
    <property type="evidence" value="ECO:0007669"/>
    <property type="project" value="UniProtKB-KW"/>
</dbReference>
<dbReference type="Gene3D" id="3.40.50.2000">
    <property type="entry name" value="Glycogen Phosphorylase B"/>
    <property type="match status" value="1"/>
</dbReference>
<dbReference type="InterPro" id="IPR001296">
    <property type="entry name" value="Glyco_trans_1"/>
</dbReference>
<dbReference type="PANTHER" id="PTHR46401">
    <property type="entry name" value="GLYCOSYLTRANSFERASE WBBK-RELATED"/>
    <property type="match status" value="1"/>
</dbReference>
<dbReference type="PANTHER" id="PTHR46401:SF2">
    <property type="entry name" value="GLYCOSYLTRANSFERASE WBBK-RELATED"/>
    <property type="match status" value="1"/>
</dbReference>
<dbReference type="Pfam" id="PF00534">
    <property type="entry name" value="Glycos_transf_1"/>
    <property type="match status" value="1"/>
</dbReference>
<dbReference type="SUPFAM" id="SSF53756">
    <property type="entry name" value="UDP-Glycosyltransferase/glycogen phosphorylase"/>
    <property type="match status" value="1"/>
</dbReference>
<accession>Q8QL34</accession>
<accession>Q5TJ99</accession>
<gene>
    <name type="ORF">335</name>
</gene>
<feature type="chain" id="PRO_0000342287" description="Uncharacterized glycosyltransferase 335">
    <location>
        <begin position="1"/>
        <end position="335"/>
    </location>
</feature>
<name>Y335_SIRV1</name>
<sequence length="335" mass="38976">MKTAILTMNYSSISNVSEDIAEVLRENGEIVTITKNPFYIPKAEKLIVFIPFHPPSLNPYLYAFYQFNGKKLFYTTCDGIPNIEIVNKYLLQDVKFIPNSKFSAMNLQEVGLQTDLPVFHGINFKIVENAEKLVPQLKQKLDKDFPNTIKFGIVSGLTKRKNMDLMLQVFNELNTKYPDIAKKIHFFVISHKQFTQNEVPANVHFVAEFGFNSREYIFGFYGAMDYIIVPSGTEGFGMPVLESMAMGTPVIHQLMPPFDEFTSWQWNLLIKSSKVEEYYDKEHGQKWKIHKFEIEDMINAIILASELQDREERSTKLKELAKRYDIRNLYTRFLE</sequence>
<proteinExistence type="inferred from homology"/>
<comment type="similarity">
    <text evidence="1">Belongs to the glycosyltransferase group 1 family. Glycosyltransferase 4 subfamily.</text>
</comment>
<organism>
    <name type="scientific">Sulfolobus islandicus rod-shaped virus 1</name>
    <name type="common">SIRV-1</name>
    <name type="synonym">Sulfolobus virus SIRV-1</name>
    <dbReference type="NCBI Taxonomy" id="157898"/>
    <lineage>
        <taxon>Viruses</taxon>
        <taxon>Adnaviria</taxon>
        <taxon>Zilligvirae</taxon>
        <taxon>Taleaviricota</taxon>
        <taxon>Tokiviricetes</taxon>
        <taxon>Ligamenvirales</taxon>
        <taxon>Rudiviridae</taxon>
        <taxon>Icerudivirus</taxon>
        <taxon>Icerudivirus SIRV1</taxon>
    </lineage>
</organism>
<organismHost>
    <name type="scientific">Saccharolobus islandicus</name>
    <name type="common">Sulfolobus islandicus</name>
    <dbReference type="NCBI Taxonomy" id="43080"/>
</organismHost>
<protein>
    <recommendedName>
        <fullName>Uncharacterized glycosyltransferase 335</fullName>
        <ecNumber>2.4.-.-</ecNumber>
    </recommendedName>
</protein>
<keyword id="KW-0328">Glycosyltransferase</keyword>
<keyword id="KW-1185">Reference proteome</keyword>
<keyword id="KW-0808">Transferase</keyword>